<proteinExistence type="inferred from homology"/>
<evidence type="ECO:0000255" key="1">
    <source>
        <dbReference type="HAMAP-Rule" id="MF_00016"/>
    </source>
</evidence>
<protein>
    <recommendedName>
        <fullName evidence="1">Holliday junction branch migration complex subunit RuvB</fullName>
        <ecNumber evidence="1">3.6.4.-</ecNumber>
    </recommendedName>
</protein>
<comment type="function">
    <text evidence="1">The RuvA-RuvB-RuvC complex processes Holliday junction (HJ) DNA during genetic recombination and DNA repair, while the RuvA-RuvB complex plays an important role in the rescue of blocked DNA replication forks via replication fork reversal (RFR). RuvA specifically binds to HJ cruciform DNA, conferring on it an open structure. The RuvB hexamer acts as an ATP-dependent pump, pulling dsDNA into and through the RuvAB complex. RuvB forms 2 homohexamers on either side of HJ DNA bound by 1 or 2 RuvA tetramers; 4 subunits per hexamer contact DNA at a time. Coordinated motions by a converter formed by DNA-disengaged RuvB subunits stimulates ATP hydrolysis and nucleotide exchange. Immobilization of the converter enables RuvB to convert the ATP-contained energy into a lever motion, pulling 2 nucleotides of DNA out of the RuvA tetramer per ATP hydrolyzed, thus driving DNA branch migration. The RuvB motors rotate together with the DNA substrate, which together with the progressing nucleotide cycle form the mechanistic basis for DNA recombination by continuous HJ branch migration. Branch migration allows RuvC to scan DNA until it finds its consensus sequence, where it cleaves and resolves cruciform DNA.</text>
</comment>
<comment type="catalytic activity">
    <reaction evidence="1">
        <text>ATP + H2O = ADP + phosphate + H(+)</text>
        <dbReference type="Rhea" id="RHEA:13065"/>
        <dbReference type="ChEBI" id="CHEBI:15377"/>
        <dbReference type="ChEBI" id="CHEBI:15378"/>
        <dbReference type="ChEBI" id="CHEBI:30616"/>
        <dbReference type="ChEBI" id="CHEBI:43474"/>
        <dbReference type="ChEBI" id="CHEBI:456216"/>
    </reaction>
</comment>
<comment type="subunit">
    <text evidence="1">Homohexamer. Forms an RuvA(8)-RuvB(12)-Holliday junction (HJ) complex. HJ DNA is sandwiched between 2 RuvA tetramers; dsDNA enters through RuvA and exits via RuvB. An RuvB hexamer assembles on each DNA strand where it exits the tetramer. Each RuvB hexamer is contacted by two RuvA subunits (via domain III) on 2 adjacent RuvB subunits; this complex drives branch migration. In the full resolvosome a probable DNA-RuvA(4)-RuvB(12)-RuvC(2) complex forms which resolves the HJ.</text>
</comment>
<comment type="subcellular location">
    <subcellularLocation>
        <location evidence="1">Cytoplasm</location>
    </subcellularLocation>
</comment>
<comment type="domain">
    <text evidence="1">Has 3 domains, the large (RuvB-L) and small ATPase (RuvB-S) domains and the C-terminal head (RuvB-H) domain. The head domain binds DNA, while the ATPase domains jointly bind ATP, ADP or are empty depending on the state of the subunit in the translocation cycle. During a single DNA translocation step the structure of each domain remains the same, but their relative positions change.</text>
</comment>
<comment type="similarity">
    <text evidence="1">Belongs to the RuvB family.</text>
</comment>
<organism>
    <name type="scientific">Bacillus mycoides (strain KBAB4)</name>
    <name type="common">Bacillus weihenstephanensis</name>
    <dbReference type="NCBI Taxonomy" id="315730"/>
    <lineage>
        <taxon>Bacteria</taxon>
        <taxon>Bacillati</taxon>
        <taxon>Bacillota</taxon>
        <taxon>Bacilli</taxon>
        <taxon>Bacillales</taxon>
        <taxon>Bacillaceae</taxon>
        <taxon>Bacillus</taxon>
        <taxon>Bacillus cereus group</taxon>
    </lineage>
</organism>
<feature type="chain" id="PRO_1000089617" description="Holliday junction branch migration complex subunit RuvB">
    <location>
        <begin position="1"/>
        <end position="333"/>
    </location>
</feature>
<feature type="region of interest" description="Large ATPase domain (RuvB-L)" evidence="1">
    <location>
        <begin position="1"/>
        <end position="182"/>
    </location>
</feature>
<feature type="region of interest" description="Small ATPAse domain (RuvB-S)" evidence="1">
    <location>
        <begin position="183"/>
        <end position="253"/>
    </location>
</feature>
<feature type="region of interest" description="Head domain (RuvB-H)" evidence="1">
    <location>
        <begin position="256"/>
        <end position="333"/>
    </location>
</feature>
<feature type="binding site" evidence="1">
    <location>
        <position position="21"/>
    </location>
    <ligand>
        <name>ATP</name>
        <dbReference type="ChEBI" id="CHEBI:30616"/>
    </ligand>
</feature>
<feature type="binding site" evidence="1">
    <location>
        <position position="22"/>
    </location>
    <ligand>
        <name>ATP</name>
        <dbReference type="ChEBI" id="CHEBI:30616"/>
    </ligand>
</feature>
<feature type="binding site" evidence="1">
    <location>
        <position position="63"/>
    </location>
    <ligand>
        <name>ATP</name>
        <dbReference type="ChEBI" id="CHEBI:30616"/>
    </ligand>
</feature>
<feature type="binding site" evidence="1">
    <location>
        <position position="66"/>
    </location>
    <ligand>
        <name>ATP</name>
        <dbReference type="ChEBI" id="CHEBI:30616"/>
    </ligand>
</feature>
<feature type="binding site" evidence="1">
    <location>
        <position position="67"/>
    </location>
    <ligand>
        <name>ATP</name>
        <dbReference type="ChEBI" id="CHEBI:30616"/>
    </ligand>
</feature>
<feature type="binding site" evidence="1">
    <location>
        <position position="67"/>
    </location>
    <ligand>
        <name>Mg(2+)</name>
        <dbReference type="ChEBI" id="CHEBI:18420"/>
    </ligand>
</feature>
<feature type="binding site" evidence="1">
    <location>
        <position position="68"/>
    </location>
    <ligand>
        <name>ATP</name>
        <dbReference type="ChEBI" id="CHEBI:30616"/>
    </ligand>
</feature>
<feature type="binding site" evidence="1">
    <location>
        <begin position="129"/>
        <end position="131"/>
    </location>
    <ligand>
        <name>ATP</name>
        <dbReference type="ChEBI" id="CHEBI:30616"/>
    </ligand>
</feature>
<feature type="binding site" evidence="1">
    <location>
        <position position="172"/>
    </location>
    <ligand>
        <name>ATP</name>
        <dbReference type="ChEBI" id="CHEBI:30616"/>
    </ligand>
</feature>
<feature type="binding site" evidence="1">
    <location>
        <position position="182"/>
    </location>
    <ligand>
        <name>ATP</name>
        <dbReference type="ChEBI" id="CHEBI:30616"/>
    </ligand>
</feature>
<feature type="binding site" evidence="1">
    <location>
        <position position="219"/>
    </location>
    <ligand>
        <name>ATP</name>
        <dbReference type="ChEBI" id="CHEBI:30616"/>
    </ligand>
</feature>
<feature type="binding site" evidence="1">
    <location>
        <position position="311"/>
    </location>
    <ligand>
        <name>DNA</name>
        <dbReference type="ChEBI" id="CHEBI:16991"/>
    </ligand>
</feature>
<feature type="binding site" evidence="1">
    <location>
        <position position="316"/>
    </location>
    <ligand>
        <name>DNA</name>
        <dbReference type="ChEBI" id="CHEBI:16991"/>
    </ligand>
</feature>
<gene>
    <name evidence="1" type="primary">ruvB</name>
    <name type="ordered locus">BcerKBAB4_4267</name>
</gene>
<accession>A9VIP6</accession>
<reference key="1">
    <citation type="journal article" date="2008" name="Chem. Biol. Interact.">
        <title>Extending the Bacillus cereus group genomics to putative food-borne pathogens of different toxicity.</title>
        <authorList>
            <person name="Lapidus A."/>
            <person name="Goltsman E."/>
            <person name="Auger S."/>
            <person name="Galleron N."/>
            <person name="Segurens B."/>
            <person name="Dossat C."/>
            <person name="Land M.L."/>
            <person name="Broussolle V."/>
            <person name="Brillard J."/>
            <person name="Guinebretiere M.-H."/>
            <person name="Sanchis V."/>
            <person name="Nguen-the C."/>
            <person name="Lereclus D."/>
            <person name="Richardson P."/>
            <person name="Wincker P."/>
            <person name="Weissenbach J."/>
            <person name="Ehrlich S.D."/>
            <person name="Sorokin A."/>
        </authorList>
    </citation>
    <scope>NUCLEOTIDE SEQUENCE [LARGE SCALE GENOMIC DNA]</scope>
    <source>
        <strain>KBAB4</strain>
    </source>
</reference>
<name>RUVB_BACMK</name>
<sequence length="333" mass="37054">MDERLLSGESGYEDADLEYSLRPQTLRQYIGQDKAKHNLEVFIEAAKMREETLDHVLLYGPPGLGKTTLANIIANEMGVNIRTTSGPAIERPGDLAAVLTALQPGDVLFIDEIHRLHRSIEEVLYPAMEDFCLDIVIGKGPSARSVRLDLPPFTLVGATTRAGALSAPLRDRFGVLSRLEYYTVDQLSAIVERTAEVFEVEIDSLAALEIARRARGTPRIANRLLRRVRDFAQVRSDGTIAMEITQMALELLQVDKLGLDHIDHKLLLGIIEKFRGGPVGLETVSATIGEESHTIEDVYEPYLLQIGFLQRTPRGRIVTPLAYEHFGMEMPKV</sequence>
<keyword id="KW-0067">ATP-binding</keyword>
<keyword id="KW-0963">Cytoplasm</keyword>
<keyword id="KW-0227">DNA damage</keyword>
<keyword id="KW-0233">DNA recombination</keyword>
<keyword id="KW-0234">DNA repair</keyword>
<keyword id="KW-0238">DNA-binding</keyword>
<keyword id="KW-0378">Hydrolase</keyword>
<keyword id="KW-0547">Nucleotide-binding</keyword>
<dbReference type="EC" id="3.6.4.-" evidence="1"/>
<dbReference type="EMBL" id="CP000903">
    <property type="protein sequence ID" value="ABY45426.1"/>
    <property type="molecule type" value="Genomic_DNA"/>
</dbReference>
<dbReference type="RefSeq" id="WP_000344470.1">
    <property type="nucleotide sequence ID" value="NZ_CAKMRX030000033.1"/>
</dbReference>
<dbReference type="SMR" id="A9VIP6"/>
<dbReference type="GeneID" id="66266011"/>
<dbReference type="KEGG" id="bwe:BcerKBAB4_4267"/>
<dbReference type="eggNOG" id="COG2255">
    <property type="taxonomic scope" value="Bacteria"/>
</dbReference>
<dbReference type="HOGENOM" id="CLU_055599_1_0_9"/>
<dbReference type="Proteomes" id="UP000002154">
    <property type="component" value="Chromosome"/>
</dbReference>
<dbReference type="GO" id="GO:0005737">
    <property type="term" value="C:cytoplasm"/>
    <property type="evidence" value="ECO:0007669"/>
    <property type="project" value="UniProtKB-SubCell"/>
</dbReference>
<dbReference type="GO" id="GO:0048476">
    <property type="term" value="C:Holliday junction resolvase complex"/>
    <property type="evidence" value="ECO:0007669"/>
    <property type="project" value="UniProtKB-UniRule"/>
</dbReference>
<dbReference type="GO" id="GO:0005524">
    <property type="term" value="F:ATP binding"/>
    <property type="evidence" value="ECO:0007669"/>
    <property type="project" value="UniProtKB-UniRule"/>
</dbReference>
<dbReference type="GO" id="GO:0016887">
    <property type="term" value="F:ATP hydrolysis activity"/>
    <property type="evidence" value="ECO:0007669"/>
    <property type="project" value="InterPro"/>
</dbReference>
<dbReference type="GO" id="GO:0000400">
    <property type="term" value="F:four-way junction DNA binding"/>
    <property type="evidence" value="ECO:0007669"/>
    <property type="project" value="UniProtKB-UniRule"/>
</dbReference>
<dbReference type="GO" id="GO:0009378">
    <property type="term" value="F:four-way junction helicase activity"/>
    <property type="evidence" value="ECO:0007669"/>
    <property type="project" value="InterPro"/>
</dbReference>
<dbReference type="GO" id="GO:0006310">
    <property type="term" value="P:DNA recombination"/>
    <property type="evidence" value="ECO:0007669"/>
    <property type="project" value="UniProtKB-UniRule"/>
</dbReference>
<dbReference type="GO" id="GO:0006281">
    <property type="term" value="P:DNA repair"/>
    <property type="evidence" value="ECO:0007669"/>
    <property type="project" value="UniProtKB-UniRule"/>
</dbReference>
<dbReference type="CDD" id="cd00009">
    <property type="entry name" value="AAA"/>
    <property type="match status" value="1"/>
</dbReference>
<dbReference type="Gene3D" id="1.10.8.60">
    <property type="match status" value="1"/>
</dbReference>
<dbReference type="Gene3D" id="3.40.50.300">
    <property type="entry name" value="P-loop containing nucleotide triphosphate hydrolases"/>
    <property type="match status" value="1"/>
</dbReference>
<dbReference type="Gene3D" id="1.10.10.10">
    <property type="entry name" value="Winged helix-like DNA-binding domain superfamily/Winged helix DNA-binding domain"/>
    <property type="match status" value="1"/>
</dbReference>
<dbReference type="HAMAP" id="MF_00016">
    <property type="entry name" value="DNA_HJ_migration_RuvB"/>
    <property type="match status" value="1"/>
</dbReference>
<dbReference type="InterPro" id="IPR003593">
    <property type="entry name" value="AAA+_ATPase"/>
</dbReference>
<dbReference type="InterPro" id="IPR041445">
    <property type="entry name" value="AAA_lid_4"/>
</dbReference>
<dbReference type="InterPro" id="IPR004605">
    <property type="entry name" value="DNA_helicase_Holl-junc_RuvB"/>
</dbReference>
<dbReference type="InterPro" id="IPR027417">
    <property type="entry name" value="P-loop_NTPase"/>
</dbReference>
<dbReference type="InterPro" id="IPR008824">
    <property type="entry name" value="RuvB-like_N"/>
</dbReference>
<dbReference type="InterPro" id="IPR008823">
    <property type="entry name" value="RuvB_C"/>
</dbReference>
<dbReference type="InterPro" id="IPR036388">
    <property type="entry name" value="WH-like_DNA-bd_sf"/>
</dbReference>
<dbReference type="InterPro" id="IPR036390">
    <property type="entry name" value="WH_DNA-bd_sf"/>
</dbReference>
<dbReference type="NCBIfam" id="NF000868">
    <property type="entry name" value="PRK00080.1"/>
    <property type="match status" value="1"/>
</dbReference>
<dbReference type="NCBIfam" id="TIGR00635">
    <property type="entry name" value="ruvB"/>
    <property type="match status" value="1"/>
</dbReference>
<dbReference type="PANTHER" id="PTHR42848">
    <property type="match status" value="1"/>
</dbReference>
<dbReference type="PANTHER" id="PTHR42848:SF1">
    <property type="entry name" value="HOLLIDAY JUNCTION BRANCH MIGRATION COMPLEX SUBUNIT RUVB"/>
    <property type="match status" value="1"/>
</dbReference>
<dbReference type="Pfam" id="PF17864">
    <property type="entry name" value="AAA_lid_4"/>
    <property type="match status" value="1"/>
</dbReference>
<dbReference type="Pfam" id="PF05491">
    <property type="entry name" value="RuvB_C"/>
    <property type="match status" value="1"/>
</dbReference>
<dbReference type="Pfam" id="PF05496">
    <property type="entry name" value="RuvB_N"/>
    <property type="match status" value="1"/>
</dbReference>
<dbReference type="SMART" id="SM00382">
    <property type="entry name" value="AAA"/>
    <property type="match status" value="1"/>
</dbReference>
<dbReference type="SUPFAM" id="SSF52540">
    <property type="entry name" value="P-loop containing nucleoside triphosphate hydrolases"/>
    <property type="match status" value="1"/>
</dbReference>
<dbReference type="SUPFAM" id="SSF46785">
    <property type="entry name" value="Winged helix' DNA-binding domain"/>
    <property type="match status" value="1"/>
</dbReference>